<dbReference type="EC" id="3.1.3.5" evidence="1"/>
<dbReference type="EMBL" id="CR626927">
    <property type="protein sequence ID" value="CAH06443.1"/>
    <property type="molecule type" value="Genomic_DNA"/>
</dbReference>
<dbReference type="RefSeq" id="WP_005784852.1">
    <property type="nucleotide sequence ID" value="NZ_UFTH01000001.1"/>
</dbReference>
<dbReference type="SMR" id="Q5LHD7"/>
<dbReference type="PaxDb" id="272559-BF9343_0664"/>
<dbReference type="GeneID" id="60367019"/>
<dbReference type="KEGG" id="bfs:BF9343_0664"/>
<dbReference type="eggNOG" id="COG0496">
    <property type="taxonomic scope" value="Bacteria"/>
</dbReference>
<dbReference type="HOGENOM" id="CLU_045192_1_0_10"/>
<dbReference type="Proteomes" id="UP000006731">
    <property type="component" value="Chromosome"/>
</dbReference>
<dbReference type="GO" id="GO:0005737">
    <property type="term" value="C:cytoplasm"/>
    <property type="evidence" value="ECO:0007669"/>
    <property type="project" value="UniProtKB-SubCell"/>
</dbReference>
<dbReference type="GO" id="GO:0008254">
    <property type="term" value="F:3'-nucleotidase activity"/>
    <property type="evidence" value="ECO:0007669"/>
    <property type="project" value="TreeGrafter"/>
</dbReference>
<dbReference type="GO" id="GO:0008253">
    <property type="term" value="F:5'-nucleotidase activity"/>
    <property type="evidence" value="ECO:0007669"/>
    <property type="project" value="UniProtKB-UniRule"/>
</dbReference>
<dbReference type="GO" id="GO:0004309">
    <property type="term" value="F:exopolyphosphatase activity"/>
    <property type="evidence" value="ECO:0007669"/>
    <property type="project" value="TreeGrafter"/>
</dbReference>
<dbReference type="GO" id="GO:0046872">
    <property type="term" value="F:metal ion binding"/>
    <property type="evidence" value="ECO:0007669"/>
    <property type="project" value="UniProtKB-UniRule"/>
</dbReference>
<dbReference type="GO" id="GO:0000166">
    <property type="term" value="F:nucleotide binding"/>
    <property type="evidence" value="ECO:0007669"/>
    <property type="project" value="UniProtKB-KW"/>
</dbReference>
<dbReference type="Gene3D" id="3.40.1210.10">
    <property type="entry name" value="Survival protein SurE-like phosphatase/nucleotidase"/>
    <property type="match status" value="1"/>
</dbReference>
<dbReference type="HAMAP" id="MF_00060">
    <property type="entry name" value="SurE"/>
    <property type="match status" value="1"/>
</dbReference>
<dbReference type="InterPro" id="IPR030048">
    <property type="entry name" value="SurE"/>
</dbReference>
<dbReference type="InterPro" id="IPR002828">
    <property type="entry name" value="SurE-like_Pase/nucleotidase"/>
</dbReference>
<dbReference type="InterPro" id="IPR036523">
    <property type="entry name" value="SurE-like_sf"/>
</dbReference>
<dbReference type="NCBIfam" id="NF001492">
    <property type="entry name" value="PRK00346.2-2"/>
    <property type="match status" value="1"/>
</dbReference>
<dbReference type="NCBIfam" id="TIGR00087">
    <property type="entry name" value="surE"/>
    <property type="match status" value="1"/>
</dbReference>
<dbReference type="PANTHER" id="PTHR30457">
    <property type="entry name" value="5'-NUCLEOTIDASE SURE"/>
    <property type="match status" value="1"/>
</dbReference>
<dbReference type="PANTHER" id="PTHR30457:SF12">
    <property type="entry name" value="5'_3'-NUCLEOTIDASE SURE"/>
    <property type="match status" value="1"/>
</dbReference>
<dbReference type="Pfam" id="PF01975">
    <property type="entry name" value="SurE"/>
    <property type="match status" value="1"/>
</dbReference>
<dbReference type="SUPFAM" id="SSF64167">
    <property type="entry name" value="SurE-like"/>
    <property type="match status" value="1"/>
</dbReference>
<name>SURE_BACFN</name>
<evidence type="ECO:0000255" key="1">
    <source>
        <dbReference type="HAMAP-Rule" id="MF_00060"/>
    </source>
</evidence>
<organism>
    <name type="scientific">Bacteroides fragilis (strain ATCC 25285 / DSM 2151 / CCUG 4856 / JCM 11019 / LMG 10263 / NCTC 9343 / Onslow / VPI 2553 / EN-2)</name>
    <dbReference type="NCBI Taxonomy" id="272559"/>
    <lineage>
        <taxon>Bacteria</taxon>
        <taxon>Pseudomonadati</taxon>
        <taxon>Bacteroidota</taxon>
        <taxon>Bacteroidia</taxon>
        <taxon>Bacteroidales</taxon>
        <taxon>Bacteroidaceae</taxon>
        <taxon>Bacteroides</taxon>
    </lineage>
</organism>
<proteinExistence type="inferred from homology"/>
<accession>Q5LHD7</accession>
<feature type="chain" id="PRO_0000235593" description="5'-nucleotidase SurE">
    <location>
        <begin position="1"/>
        <end position="255"/>
    </location>
</feature>
<feature type="binding site" evidence="1">
    <location>
        <position position="13"/>
    </location>
    <ligand>
        <name>a divalent metal cation</name>
        <dbReference type="ChEBI" id="CHEBI:60240"/>
    </ligand>
</feature>
<feature type="binding site" evidence="1">
    <location>
        <position position="14"/>
    </location>
    <ligand>
        <name>a divalent metal cation</name>
        <dbReference type="ChEBI" id="CHEBI:60240"/>
    </ligand>
</feature>
<feature type="binding site" evidence="1">
    <location>
        <position position="44"/>
    </location>
    <ligand>
        <name>a divalent metal cation</name>
        <dbReference type="ChEBI" id="CHEBI:60240"/>
    </ligand>
</feature>
<feature type="binding site" evidence="1">
    <location>
        <position position="100"/>
    </location>
    <ligand>
        <name>a divalent metal cation</name>
        <dbReference type="ChEBI" id="CHEBI:60240"/>
    </ligand>
</feature>
<comment type="function">
    <text evidence="1">Nucleotidase that shows phosphatase activity on nucleoside 5'-monophosphates.</text>
</comment>
<comment type="catalytic activity">
    <reaction evidence="1">
        <text>a ribonucleoside 5'-phosphate + H2O = a ribonucleoside + phosphate</text>
        <dbReference type="Rhea" id="RHEA:12484"/>
        <dbReference type="ChEBI" id="CHEBI:15377"/>
        <dbReference type="ChEBI" id="CHEBI:18254"/>
        <dbReference type="ChEBI" id="CHEBI:43474"/>
        <dbReference type="ChEBI" id="CHEBI:58043"/>
        <dbReference type="EC" id="3.1.3.5"/>
    </reaction>
</comment>
<comment type="cofactor">
    <cofactor evidence="1">
        <name>a divalent metal cation</name>
        <dbReference type="ChEBI" id="CHEBI:60240"/>
    </cofactor>
    <text evidence="1">Binds 1 divalent metal cation per subunit.</text>
</comment>
<comment type="subcellular location">
    <subcellularLocation>
        <location evidence="1">Cytoplasm</location>
    </subcellularLocation>
</comment>
<comment type="similarity">
    <text evidence="1">Belongs to the SurE nucleotidase family.</text>
</comment>
<reference key="1">
    <citation type="journal article" date="2005" name="Science">
        <title>Extensive DNA inversions in the B. fragilis genome control variable gene expression.</title>
        <authorList>
            <person name="Cerdeno-Tarraga A.-M."/>
            <person name="Patrick S."/>
            <person name="Crossman L.C."/>
            <person name="Blakely G."/>
            <person name="Abratt V."/>
            <person name="Lennard N."/>
            <person name="Poxton I."/>
            <person name="Duerden B."/>
            <person name="Harris B."/>
            <person name="Quail M.A."/>
            <person name="Barron A."/>
            <person name="Clark L."/>
            <person name="Corton C."/>
            <person name="Doggett J."/>
            <person name="Holden M.T.G."/>
            <person name="Larke N."/>
            <person name="Line A."/>
            <person name="Lord A."/>
            <person name="Norbertczak H."/>
            <person name="Ormond D."/>
            <person name="Price C."/>
            <person name="Rabbinowitsch E."/>
            <person name="Woodward J."/>
            <person name="Barrell B.G."/>
            <person name="Parkhill J."/>
        </authorList>
    </citation>
    <scope>NUCLEOTIDE SEQUENCE [LARGE SCALE GENOMIC DNA]</scope>
    <source>
        <strain>ATCC 25285 / DSM 2151 / CCUG 4856 / JCM 11019 / LMG 10263 / NCTC 9343 / Onslow / VPI 2553 / EN-2</strain>
    </source>
</reference>
<keyword id="KW-0963">Cytoplasm</keyword>
<keyword id="KW-0378">Hydrolase</keyword>
<keyword id="KW-0479">Metal-binding</keyword>
<keyword id="KW-0547">Nucleotide-binding</keyword>
<protein>
    <recommendedName>
        <fullName evidence="1">5'-nucleotidase SurE</fullName>
        <ecNumber evidence="1">3.1.3.5</ecNumber>
    </recommendedName>
    <alternativeName>
        <fullName evidence="1">Nucleoside 5'-monophosphate phosphohydrolase</fullName>
    </alternativeName>
</protein>
<gene>
    <name evidence="1" type="primary">surE</name>
    <name type="ordered locus">BF0698</name>
</gene>
<sequence length="255" mass="28007">MENKRPLILVSNDDGIMAKGISELIKFLRPLGEIVVMAPDAPRSGSGCALTVTQPVHYQLLKKDVGLTVYKCSGTPTDCIKLARNQILDRKPDLVVGGINHGDNSATNVHYSGTMGIVIEGCLNGIPSIGFSICDHAPGADFDAAGPYVRRIAAMVLEKGLPPLTCLNVNFPNTQEIKGVRICEQAKGHWSGEWQACPRRDDANFYWLTGEFIDHEPENEKNDHWALANGYVAITPTVVDMTAYHFMDELKSWEL</sequence>